<sequence length="103" mass="11410">MYAVFQSGGKQHRVAEGHTVRLEKLEVATGETIEFDQVLLIADGETVHVGAPLVAGGKVVAEVVSHGRGDKVTIVKFRRRKHHDKKMGHRQWFTEVKITAINA</sequence>
<feature type="chain" id="PRO_1000166739" description="Large ribosomal subunit protein bL21">
    <location>
        <begin position="1"/>
        <end position="103"/>
    </location>
</feature>
<protein>
    <recommendedName>
        <fullName evidence="1">Large ribosomal subunit protein bL21</fullName>
    </recommendedName>
    <alternativeName>
        <fullName evidence="2">50S ribosomal protein L21</fullName>
    </alternativeName>
</protein>
<organism>
    <name type="scientific">Shewanella baltica (strain OS223)</name>
    <dbReference type="NCBI Taxonomy" id="407976"/>
    <lineage>
        <taxon>Bacteria</taxon>
        <taxon>Pseudomonadati</taxon>
        <taxon>Pseudomonadota</taxon>
        <taxon>Gammaproteobacteria</taxon>
        <taxon>Alteromonadales</taxon>
        <taxon>Shewanellaceae</taxon>
        <taxon>Shewanella</taxon>
    </lineage>
</organism>
<accession>B8EC06</accession>
<evidence type="ECO:0000255" key="1">
    <source>
        <dbReference type="HAMAP-Rule" id="MF_01363"/>
    </source>
</evidence>
<evidence type="ECO:0000305" key="2"/>
<dbReference type="EMBL" id="CP001252">
    <property type="protein sequence ID" value="ACK47807.1"/>
    <property type="molecule type" value="Genomic_DNA"/>
</dbReference>
<dbReference type="RefSeq" id="WP_006080526.1">
    <property type="nucleotide sequence ID" value="NC_011663.1"/>
</dbReference>
<dbReference type="SMR" id="B8EC06"/>
<dbReference type="GeneID" id="11774616"/>
<dbReference type="KEGG" id="sbp:Sbal223_3323"/>
<dbReference type="HOGENOM" id="CLU_061463_3_3_6"/>
<dbReference type="Proteomes" id="UP000002507">
    <property type="component" value="Chromosome"/>
</dbReference>
<dbReference type="GO" id="GO:0005737">
    <property type="term" value="C:cytoplasm"/>
    <property type="evidence" value="ECO:0007669"/>
    <property type="project" value="UniProtKB-ARBA"/>
</dbReference>
<dbReference type="GO" id="GO:1990904">
    <property type="term" value="C:ribonucleoprotein complex"/>
    <property type="evidence" value="ECO:0007669"/>
    <property type="project" value="UniProtKB-KW"/>
</dbReference>
<dbReference type="GO" id="GO:0005840">
    <property type="term" value="C:ribosome"/>
    <property type="evidence" value="ECO:0007669"/>
    <property type="project" value="UniProtKB-KW"/>
</dbReference>
<dbReference type="GO" id="GO:0019843">
    <property type="term" value="F:rRNA binding"/>
    <property type="evidence" value="ECO:0007669"/>
    <property type="project" value="UniProtKB-UniRule"/>
</dbReference>
<dbReference type="GO" id="GO:0003735">
    <property type="term" value="F:structural constituent of ribosome"/>
    <property type="evidence" value="ECO:0007669"/>
    <property type="project" value="InterPro"/>
</dbReference>
<dbReference type="GO" id="GO:0006412">
    <property type="term" value="P:translation"/>
    <property type="evidence" value="ECO:0007669"/>
    <property type="project" value="UniProtKB-UniRule"/>
</dbReference>
<dbReference type="HAMAP" id="MF_01363">
    <property type="entry name" value="Ribosomal_bL21"/>
    <property type="match status" value="1"/>
</dbReference>
<dbReference type="InterPro" id="IPR028909">
    <property type="entry name" value="bL21-like"/>
</dbReference>
<dbReference type="InterPro" id="IPR036164">
    <property type="entry name" value="bL21-like_sf"/>
</dbReference>
<dbReference type="InterPro" id="IPR001787">
    <property type="entry name" value="Ribosomal_bL21"/>
</dbReference>
<dbReference type="InterPro" id="IPR018258">
    <property type="entry name" value="Ribosomal_bL21_CS"/>
</dbReference>
<dbReference type="NCBIfam" id="TIGR00061">
    <property type="entry name" value="L21"/>
    <property type="match status" value="1"/>
</dbReference>
<dbReference type="PANTHER" id="PTHR21349">
    <property type="entry name" value="50S RIBOSOMAL PROTEIN L21"/>
    <property type="match status" value="1"/>
</dbReference>
<dbReference type="PANTHER" id="PTHR21349:SF0">
    <property type="entry name" value="LARGE RIBOSOMAL SUBUNIT PROTEIN BL21M"/>
    <property type="match status" value="1"/>
</dbReference>
<dbReference type="Pfam" id="PF00829">
    <property type="entry name" value="Ribosomal_L21p"/>
    <property type="match status" value="1"/>
</dbReference>
<dbReference type="SUPFAM" id="SSF141091">
    <property type="entry name" value="L21p-like"/>
    <property type="match status" value="1"/>
</dbReference>
<dbReference type="PROSITE" id="PS01169">
    <property type="entry name" value="RIBOSOMAL_L21"/>
    <property type="match status" value="1"/>
</dbReference>
<reference key="1">
    <citation type="submission" date="2008-12" db="EMBL/GenBank/DDBJ databases">
        <title>Complete sequence of chromosome of Shewanella baltica OS223.</title>
        <authorList>
            <consortium name="US DOE Joint Genome Institute"/>
            <person name="Lucas S."/>
            <person name="Copeland A."/>
            <person name="Lapidus A."/>
            <person name="Glavina del Rio T."/>
            <person name="Dalin E."/>
            <person name="Tice H."/>
            <person name="Bruce D."/>
            <person name="Goodwin L."/>
            <person name="Pitluck S."/>
            <person name="Chertkov O."/>
            <person name="Meincke L."/>
            <person name="Brettin T."/>
            <person name="Detter J.C."/>
            <person name="Han C."/>
            <person name="Kuske C.R."/>
            <person name="Larimer F."/>
            <person name="Land M."/>
            <person name="Hauser L."/>
            <person name="Kyrpides N."/>
            <person name="Ovchinnikova G."/>
            <person name="Brettar I."/>
            <person name="Rodrigues J."/>
            <person name="Konstantinidis K."/>
            <person name="Tiedje J."/>
        </authorList>
    </citation>
    <scope>NUCLEOTIDE SEQUENCE [LARGE SCALE GENOMIC DNA]</scope>
    <source>
        <strain>OS223</strain>
    </source>
</reference>
<proteinExistence type="inferred from homology"/>
<keyword id="KW-0687">Ribonucleoprotein</keyword>
<keyword id="KW-0689">Ribosomal protein</keyword>
<keyword id="KW-0694">RNA-binding</keyword>
<keyword id="KW-0699">rRNA-binding</keyword>
<name>RL21_SHEB2</name>
<gene>
    <name evidence="1" type="primary">rplU</name>
    <name type="ordered locus">Sbal223_3323</name>
</gene>
<comment type="function">
    <text evidence="1">This protein binds to 23S rRNA in the presence of protein L20.</text>
</comment>
<comment type="subunit">
    <text evidence="1">Part of the 50S ribosomal subunit. Contacts protein L20.</text>
</comment>
<comment type="similarity">
    <text evidence="1">Belongs to the bacterial ribosomal protein bL21 family.</text>
</comment>